<reference key="1">
    <citation type="journal article" date="2007" name="Nat. Biotechnol.">
        <title>Complete genome sequence of the myxobacterium Sorangium cellulosum.</title>
        <authorList>
            <person name="Schneiker S."/>
            <person name="Perlova O."/>
            <person name="Kaiser O."/>
            <person name="Gerth K."/>
            <person name="Alici A."/>
            <person name="Altmeyer M.O."/>
            <person name="Bartels D."/>
            <person name="Bekel T."/>
            <person name="Beyer S."/>
            <person name="Bode E."/>
            <person name="Bode H.B."/>
            <person name="Bolten C.J."/>
            <person name="Choudhuri J.V."/>
            <person name="Doss S."/>
            <person name="Elnakady Y.A."/>
            <person name="Frank B."/>
            <person name="Gaigalat L."/>
            <person name="Goesmann A."/>
            <person name="Groeger C."/>
            <person name="Gross F."/>
            <person name="Jelsbak L."/>
            <person name="Jelsbak L."/>
            <person name="Kalinowski J."/>
            <person name="Kegler C."/>
            <person name="Knauber T."/>
            <person name="Konietzny S."/>
            <person name="Kopp M."/>
            <person name="Krause L."/>
            <person name="Krug D."/>
            <person name="Linke B."/>
            <person name="Mahmud T."/>
            <person name="Martinez-Arias R."/>
            <person name="McHardy A.C."/>
            <person name="Merai M."/>
            <person name="Meyer F."/>
            <person name="Mormann S."/>
            <person name="Munoz-Dorado J."/>
            <person name="Perez J."/>
            <person name="Pradella S."/>
            <person name="Rachid S."/>
            <person name="Raddatz G."/>
            <person name="Rosenau F."/>
            <person name="Rueckert C."/>
            <person name="Sasse F."/>
            <person name="Scharfe M."/>
            <person name="Schuster S.C."/>
            <person name="Suen G."/>
            <person name="Treuner-Lange A."/>
            <person name="Velicer G.J."/>
            <person name="Vorholter F.-J."/>
            <person name="Weissman K.J."/>
            <person name="Welch R.D."/>
            <person name="Wenzel S.C."/>
            <person name="Whitworth D.E."/>
            <person name="Wilhelm S."/>
            <person name="Wittmann C."/>
            <person name="Bloecker H."/>
            <person name="Puehler A."/>
            <person name="Mueller R."/>
        </authorList>
    </citation>
    <scope>NUCLEOTIDE SEQUENCE [LARGE SCALE GENOMIC DNA]</scope>
    <source>
        <strain>So ce56</strain>
    </source>
</reference>
<name>RL331_SORC5</name>
<feature type="chain" id="PRO_0000356674" description="Large ribosomal subunit protein bL33A">
    <location>
        <begin position="1"/>
        <end position="56"/>
    </location>
</feature>
<proteinExistence type="inferred from homology"/>
<dbReference type="EMBL" id="AM746676">
    <property type="protein sequence ID" value="CAN90560.1"/>
    <property type="molecule type" value="Genomic_DNA"/>
</dbReference>
<dbReference type="SMR" id="A9GR94"/>
<dbReference type="STRING" id="448385.sce0403"/>
<dbReference type="KEGG" id="scl:sce0403"/>
<dbReference type="eggNOG" id="COG0267">
    <property type="taxonomic scope" value="Bacteria"/>
</dbReference>
<dbReference type="HOGENOM" id="CLU_190949_0_2_7"/>
<dbReference type="OrthoDB" id="21586at2"/>
<dbReference type="BioCyc" id="SCEL448385:SCE_RS02120-MONOMER"/>
<dbReference type="Proteomes" id="UP000002139">
    <property type="component" value="Chromosome"/>
</dbReference>
<dbReference type="GO" id="GO:0005737">
    <property type="term" value="C:cytoplasm"/>
    <property type="evidence" value="ECO:0007669"/>
    <property type="project" value="UniProtKB-ARBA"/>
</dbReference>
<dbReference type="GO" id="GO:1990904">
    <property type="term" value="C:ribonucleoprotein complex"/>
    <property type="evidence" value="ECO:0007669"/>
    <property type="project" value="UniProtKB-KW"/>
</dbReference>
<dbReference type="GO" id="GO:0005840">
    <property type="term" value="C:ribosome"/>
    <property type="evidence" value="ECO:0007669"/>
    <property type="project" value="UniProtKB-KW"/>
</dbReference>
<dbReference type="GO" id="GO:0003735">
    <property type="term" value="F:structural constituent of ribosome"/>
    <property type="evidence" value="ECO:0007669"/>
    <property type="project" value="InterPro"/>
</dbReference>
<dbReference type="GO" id="GO:0006412">
    <property type="term" value="P:translation"/>
    <property type="evidence" value="ECO:0007669"/>
    <property type="project" value="UniProtKB-UniRule"/>
</dbReference>
<dbReference type="Gene3D" id="2.20.28.120">
    <property type="entry name" value="Ribosomal protein L33"/>
    <property type="match status" value="1"/>
</dbReference>
<dbReference type="HAMAP" id="MF_00294">
    <property type="entry name" value="Ribosomal_bL33"/>
    <property type="match status" value="1"/>
</dbReference>
<dbReference type="InterPro" id="IPR001705">
    <property type="entry name" value="Ribosomal_bL33"/>
</dbReference>
<dbReference type="InterPro" id="IPR038584">
    <property type="entry name" value="Ribosomal_bL33_sf"/>
</dbReference>
<dbReference type="InterPro" id="IPR011332">
    <property type="entry name" value="Ribosomal_zn-bd"/>
</dbReference>
<dbReference type="NCBIfam" id="NF001764">
    <property type="entry name" value="PRK00504.1"/>
    <property type="match status" value="1"/>
</dbReference>
<dbReference type="NCBIfam" id="TIGR01023">
    <property type="entry name" value="rpmG_bact"/>
    <property type="match status" value="1"/>
</dbReference>
<dbReference type="Pfam" id="PF00471">
    <property type="entry name" value="Ribosomal_L33"/>
    <property type="match status" value="1"/>
</dbReference>
<dbReference type="SUPFAM" id="SSF57829">
    <property type="entry name" value="Zn-binding ribosomal proteins"/>
    <property type="match status" value="1"/>
</dbReference>
<gene>
    <name evidence="1" type="primary">rpmG1</name>
    <name type="ordered locus">sce0403</name>
</gene>
<comment type="similarity">
    <text evidence="1">Belongs to the bacterial ribosomal protein bL33 family.</text>
</comment>
<organism>
    <name type="scientific">Sorangium cellulosum (strain So ce56)</name>
    <name type="common">Polyangium cellulosum (strain So ce56)</name>
    <dbReference type="NCBI Taxonomy" id="448385"/>
    <lineage>
        <taxon>Bacteria</taxon>
        <taxon>Pseudomonadati</taxon>
        <taxon>Myxococcota</taxon>
        <taxon>Polyangia</taxon>
        <taxon>Polyangiales</taxon>
        <taxon>Polyangiaceae</taxon>
        <taxon>Sorangium</taxon>
    </lineage>
</organism>
<sequence>MGEQAGGWRAARIAVSLACRECKSRNYKTTKAPDQVVSLKKFCKQCKKHTVHDETK</sequence>
<evidence type="ECO:0000255" key="1">
    <source>
        <dbReference type="HAMAP-Rule" id="MF_00294"/>
    </source>
</evidence>
<accession>A9GR94</accession>
<keyword id="KW-1185">Reference proteome</keyword>
<keyword id="KW-0687">Ribonucleoprotein</keyword>
<keyword id="KW-0689">Ribosomal protein</keyword>
<protein>
    <recommendedName>
        <fullName evidence="1">Large ribosomal subunit protein bL33A</fullName>
    </recommendedName>
    <alternativeName>
        <fullName evidence="1">50S ribosomal protein L33 1</fullName>
    </alternativeName>
</protein>